<dbReference type="EMBL" id="FN650108">
    <property type="protein sequence ID" value="CBI84064.1"/>
    <property type="molecule type" value="mRNA"/>
</dbReference>
<dbReference type="EMBL" id="FN650109">
    <property type="protein sequence ID" value="CBI84065.1"/>
    <property type="molecule type" value="mRNA"/>
</dbReference>
<dbReference type="EMBL" id="AB075503">
    <property type="protein sequence ID" value="BAE45753.1"/>
    <property type="molecule type" value="mRNA"/>
</dbReference>
<dbReference type="EMBL" id="AK000987">
    <property type="protein sequence ID" value="BAA91456.1"/>
    <property type="status" value="ALT_INIT"/>
    <property type="molecule type" value="mRNA"/>
</dbReference>
<dbReference type="EMBL" id="AK096148">
    <property type="protein sequence ID" value="BAC04711.1"/>
    <property type="molecule type" value="mRNA"/>
</dbReference>
<dbReference type="EMBL" id="AK124441">
    <property type="protein sequence ID" value="BAC85852.1"/>
    <property type="molecule type" value="mRNA"/>
</dbReference>
<dbReference type="EMBL" id="AK127563">
    <property type="protein sequence ID" value="BAG54523.1"/>
    <property type="molecule type" value="mRNA"/>
</dbReference>
<dbReference type="EMBL" id="AK292899">
    <property type="protein sequence ID" value="BAF85588.1"/>
    <property type="status" value="ALT_INIT"/>
    <property type="molecule type" value="mRNA"/>
</dbReference>
<dbReference type="EMBL" id="AK296561">
    <property type="protein sequence ID" value="BAH12388.1"/>
    <property type="molecule type" value="mRNA"/>
</dbReference>
<dbReference type="EMBL" id="AK303695">
    <property type="protein sequence ID" value="BAH14021.1"/>
    <property type="molecule type" value="mRNA"/>
</dbReference>
<dbReference type="EMBL" id="AK316153">
    <property type="protein sequence ID" value="BAH14524.1"/>
    <property type="molecule type" value="mRNA"/>
</dbReference>
<dbReference type="EMBL" id="DQ020202">
    <property type="protein sequence ID" value="AAY26396.1"/>
    <property type="status" value="ALT_SEQ"/>
    <property type="molecule type" value="Genomic_DNA"/>
</dbReference>
<dbReference type="EMBL" id="AC023344">
    <property type="status" value="NOT_ANNOTATED_CDS"/>
    <property type="molecule type" value="Genomic_DNA"/>
</dbReference>
<dbReference type="EMBL" id="AC027031">
    <property type="status" value="NOT_ANNOTATED_CDS"/>
    <property type="molecule type" value="Genomic_DNA"/>
</dbReference>
<dbReference type="EMBL" id="AC090579">
    <property type="status" value="NOT_ANNOTATED_CDS"/>
    <property type="molecule type" value="Genomic_DNA"/>
</dbReference>
<dbReference type="EMBL" id="AP000430">
    <property type="status" value="NOT_ANNOTATED_CDS"/>
    <property type="molecule type" value="Genomic_DNA"/>
</dbReference>
<dbReference type="EMBL" id="AP002090">
    <property type="status" value="NOT_ANNOTATED_CDS"/>
    <property type="molecule type" value="Genomic_DNA"/>
</dbReference>
<dbReference type="EMBL" id="BC032710">
    <property type="protein sequence ID" value="AAH32710.1"/>
    <property type="status" value="ALT_INIT"/>
    <property type="molecule type" value="mRNA"/>
</dbReference>
<dbReference type="EMBL" id="AF309387">
    <property type="protein sequence ID" value="AAG25715.1"/>
    <property type="status" value="ALT_INIT"/>
    <property type="molecule type" value="mRNA"/>
</dbReference>
<dbReference type="EMBL" id="AL833193">
    <property type="protein sequence ID" value="CAI46186.1"/>
    <property type="status" value="ALT_INIT"/>
    <property type="molecule type" value="mRNA"/>
</dbReference>
<dbReference type="CCDS" id="CCDS47909.1">
    <molecule id="Q8N573-5"/>
</dbReference>
<dbReference type="CCDS" id="CCDS56547.1">
    <molecule id="Q8N573-8"/>
</dbReference>
<dbReference type="CCDS" id="CCDS56548.1">
    <molecule id="Q8N573-1"/>
</dbReference>
<dbReference type="CCDS" id="CCDS56549.1">
    <molecule id="Q8N573-4"/>
</dbReference>
<dbReference type="CCDS" id="CCDS56550.1">
    <molecule id="Q8N573-7"/>
</dbReference>
<dbReference type="CCDS" id="CCDS6304.2">
    <molecule id="Q8N573-2"/>
</dbReference>
<dbReference type="RefSeq" id="NP_001185461.1">
    <molecule id="Q8N573-1"/>
    <property type="nucleotide sequence ID" value="NM_001198532.1"/>
</dbReference>
<dbReference type="RefSeq" id="NP_001185462.1">
    <molecule id="Q8N573-8"/>
    <property type="nucleotide sequence ID" value="NM_001198533.2"/>
</dbReference>
<dbReference type="RefSeq" id="NP_001185463.1">
    <molecule id="Q8N573-4"/>
    <property type="nucleotide sequence ID" value="NM_001198534.1"/>
</dbReference>
<dbReference type="RefSeq" id="NP_001185464.1">
    <molecule id="Q8N573-7"/>
    <property type="nucleotide sequence ID" value="NM_001198535.1"/>
</dbReference>
<dbReference type="RefSeq" id="NP_060472.2">
    <molecule id="Q8N573-5"/>
    <property type="nucleotide sequence ID" value="NM_018002.3"/>
</dbReference>
<dbReference type="RefSeq" id="NP_851999.2">
    <molecule id="Q8N573-2"/>
    <property type="nucleotide sequence ID" value="NM_181354.4"/>
</dbReference>
<dbReference type="RefSeq" id="XP_016869083.1">
    <property type="nucleotide sequence ID" value="XM_017013594.1"/>
</dbReference>
<dbReference type="SMR" id="Q8N573"/>
<dbReference type="BioGRID" id="120391">
    <property type="interactions" value="39"/>
</dbReference>
<dbReference type="FunCoup" id="Q8N573">
    <property type="interactions" value="2945"/>
</dbReference>
<dbReference type="IntAct" id="Q8N573">
    <property type="interactions" value="8"/>
</dbReference>
<dbReference type="MINT" id="Q8N573"/>
<dbReference type="STRING" id="9606.ENSP00000405424"/>
<dbReference type="ChEMBL" id="CHEMBL4295901"/>
<dbReference type="GlyGen" id="Q8N573">
    <property type="glycosylation" value="3 sites, 1 N-linked glycan (1 site), 1 O-linked glycan (1 site)"/>
</dbReference>
<dbReference type="iPTMnet" id="Q8N573"/>
<dbReference type="PhosphoSitePlus" id="Q8N573"/>
<dbReference type="SwissPalm" id="Q8N573"/>
<dbReference type="BioMuta" id="OXR1"/>
<dbReference type="DMDM" id="294862456"/>
<dbReference type="jPOST" id="Q8N573"/>
<dbReference type="MassIVE" id="Q8N573"/>
<dbReference type="PaxDb" id="9606-ENSP00000405424"/>
<dbReference type="PeptideAtlas" id="Q8N573"/>
<dbReference type="ProteomicsDB" id="72011">
    <molecule id="Q8N573-1"/>
</dbReference>
<dbReference type="ProteomicsDB" id="72012">
    <molecule id="Q8N573-2"/>
</dbReference>
<dbReference type="ProteomicsDB" id="72013">
    <molecule id="Q8N573-3"/>
</dbReference>
<dbReference type="ProteomicsDB" id="72014">
    <molecule id="Q8N573-4"/>
</dbReference>
<dbReference type="ProteomicsDB" id="72015">
    <molecule id="Q8N573-5"/>
</dbReference>
<dbReference type="ProteomicsDB" id="72016">
    <molecule id="Q8N573-6"/>
</dbReference>
<dbReference type="ProteomicsDB" id="72017">
    <molecule id="Q8N573-7"/>
</dbReference>
<dbReference type="ProteomicsDB" id="72018">
    <molecule id="Q8N573-8"/>
</dbReference>
<dbReference type="Pumba" id="Q8N573"/>
<dbReference type="Antibodypedia" id="26472">
    <property type="antibodies" value="200 antibodies from 28 providers"/>
</dbReference>
<dbReference type="DNASU" id="55074"/>
<dbReference type="Ensembl" id="ENST00000297447.10">
    <molecule id="Q8N573-4"/>
    <property type="protein sequence ID" value="ENSP00000297447.6"/>
    <property type="gene ID" value="ENSG00000164830.19"/>
</dbReference>
<dbReference type="Ensembl" id="ENST00000312046.10">
    <molecule id="Q8N573-2"/>
    <property type="protein sequence ID" value="ENSP00000311026.6"/>
    <property type="gene ID" value="ENSG00000164830.19"/>
</dbReference>
<dbReference type="Ensembl" id="ENST00000442977.6">
    <molecule id="Q8N573-1"/>
    <property type="protein sequence ID" value="ENSP00000405424.2"/>
    <property type="gene ID" value="ENSG00000164830.19"/>
</dbReference>
<dbReference type="Ensembl" id="ENST00000449762.6">
    <molecule id="Q8N573-7"/>
    <property type="protein sequence ID" value="ENSP00000408659.2"/>
    <property type="gene ID" value="ENSG00000164830.19"/>
</dbReference>
<dbReference type="Ensembl" id="ENST00000497705.5">
    <molecule id="Q8N573-3"/>
    <property type="protein sequence ID" value="ENSP00000431014.1"/>
    <property type="gene ID" value="ENSG00000164830.19"/>
</dbReference>
<dbReference type="Ensembl" id="ENST00000517566.7">
    <molecule id="Q8N573-8"/>
    <property type="protein sequence ID" value="ENSP00000429205.2"/>
    <property type="gene ID" value="ENSG00000164830.19"/>
</dbReference>
<dbReference type="Ensembl" id="ENST00000531443.6">
    <molecule id="Q8N573-5"/>
    <property type="protein sequence ID" value="ENSP00000431966.1"/>
    <property type="gene ID" value="ENSG00000164830.19"/>
</dbReference>
<dbReference type="GeneID" id="55074"/>
<dbReference type="KEGG" id="hsa:55074"/>
<dbReference type="MANE-Select" id="ENST00000517566.7">
    <molecule id="Q8N573-8"/>
    <property type="protein sequence ID" value="ENSP00000429205.2"/>
    <property type="RefSeq nucleotide sequence ID" value="NM_001198533.2"/>
    <property type="RefSeq protein sequence ID" value="NP_001185462.1"/>
</dbReference>
<dbReference type="UCSC" id="uc003ymf.4">
    <molecule id="Q8N573-1"/>
    <property type="organism name" value="human"/>
</dbReference>
<dbReference type="AGR" id="HGNC:15822"/>
<dbReference type="CTD" id="55074"/>
<dbReference type="DisGeNET" id="55074"/>
<dbReference type="GeneCards" id="OXR1"/>
<dbReference type="HGNC" id="HGNC:15822">
    <property type="gene designation" value="OXR1"/>
</dbReference>
<dbReference type="HPA" id="ENSG00000164830">
    <property type="expression patterns" value="Low tissue specificity"/>
</dbReference>
<dbReference type="MalaCards" id="OXR1"/>
<dbReference type="MIM" id="213000">
    <property type="type" value="phenotype"/>
</dbReference>
<dbReference type="MIM" id="605609">
    <property type="type" value="gene"/>
</dbReference>
<dbReference type="neXtProt" id="NX_Q8N573"/>
<dbReference type="OpenTargets" id="ENSG00000164830"/>
<dbReference type="PharmGKB" id="PA32856"/>
<dbReference type="VEuPathDB" id="HostDB:ENSG00000164830"/>
<dbReference type="eggNOG" id="KOG2372">
    <property type="taxonomic scope" value="Eukaryota"/>
</dbReference>
<dbReference type="GeneTree" id="ENSGT00940000155187"/>
<dbReference type="HOGENOM" id="CLU_007095_2_0_1"/>
<dbReference type="InParanoid" id="Q8N573"/>
<dbReference type="OMA" id="THIEGVC"/>
<dbReference type="OrthoDB" id="26679at2759"/>
<dbReference type="PAN-GO" id="Q8N573">
    <property type="GO annotations" value="2 GO annotations based on evolutionary models"/>
</dbReference>
<dbReference type="PhylomeDB" id="Q8N573"/>
<dbReference type="TreeFam" id="TF313530"/>
<dbReference type="PathwayCommons" id="Q8N573"/>
<dbReference type="SignaLink" id="Q8N573"/>
<dbReference type="BioGRID-ORCS" id="55074">
    <property type="hits" value="13 hits in 1160 CRISPR screens"/>
</dbReference>
<dbReference type="CD-CODE" id="FB4E32DD">
    <property type="entry name" value="Presynaptic clusters and postsynaptic densities"/>
</dbReference>
<dbReference type="ChiTaRS" id="OXR1">
    <property type="organism name" value="human"/>
</dbReference>
<dbReference type="GeneWiki" id="OXR1"/>
<dbReference type="GenomeRNAi" id="55074"/>
<dbReference type="Pharos" id="Q8N573">
    <property type="development level" value="Tbio"/>
</dbReference>
<dbReference type="PRO" id="PR:Q8N573"/>
<dbReference type="Proteomes" id="UP000005640">
    <property type="component" value="Chromosome 8"/>
</dbReference>
<dbReference type="RNAct" id="Q8N573">
    <property type="molecule type" value="protein"/>
</dbReference>
<dbReference type="Bgee" id="ENSG00000164830">
    <property type="expression patterns" value="Expressed in pons and 211 other cell types or tissues"/>
</dbReference>
<dbReference type="ExpressionAtlas" id="Q8N573">
    <property type="expression patterns" value="baseline and differential"/>
</dbReference>
<dbReference type="GO" id="GO:0005739">
    <property type="term" value="C:mitochondrion"/>
    <property type="evidence" value="ECO:0000314"/>
    <property type="project" value="FlyBase"/>
</dbReference>
<dbReference type="GO" id="GO:0005730">
    <property type="term" value="C:nucleolus"/>
    <property type="evidence" value="ECO:0007669"/>
    <property type="project" value="Ensembl"/>
</dbReference>
<dbReference type="GO" id="GO:0005634">
    <property type="term" value="C:nucleus"/>
    <property type="evidence" value="ECO:0000318"/>
    <property type="project" value="GO_Central"/>
</dbReference>
<dbReference type="GO" id="GO:0016491">
    <property type="term" value="F:oxidoreductase activity"/>
    <property type="evidence" value="ECO:0007669"/>
    <property type="project" value="Ensembl"/>
</dbReference>
<dbReference type="GO" id="GO:0007628">
    <property type="term" value="P:adult walking behavior"/>
    <property type="evidence" value="ECO:0007669"/>
    <property type="project" value="Ensembl"/>
</dbReference>
<dbReference type="GO" id="GO:0071447">
    <property type="term" value="P:cellular response to hydroperoxide"/>
    <property type="evidence" value="ECO:0007669"/>
    <property type="project" value="Ensembl"/>
</dbReference>
<dbReference type="GO" id="GO:1900408">
    <property type="term" value="P:negative regulation of cellular response to oxidative stress"/>
    <property type="evidence" value="ECO:0007669"/>
    <property type="project" value="Ensembl"/>
</dbReference>
<dbReference type="GO" id="GO:0043524">
    <property type="term" value="P:negative regulation of neuron apoptotic process"/>
    <property type="evidence" value="ECO:0007669"/>
    <property type="project" value="Ensembl"/>
</dbReference>
<dbReference type="GO" id="GO:0051402">
    <property type="term" value="P:neuron apoptotic process"/>
    <property type="evidence" value="ECO:0007669"/>
    <property type="project" value="Ensembl"/>
</dbReference>
<dbReference type="GO" id="GO:0006979">
    <property type="term" value="P:response to oxidative stress"/>
    <property type="evidence" value="ECO:0000318"/>
    <property type="project" value="GO_Central"/>
</dbReference>
<dbReference type="CDD" id="cd00118">
    <property type="entry name" value="LysM"/>
    <property type="match status" value="1"/>
</dbReference>
<dbReference type="FunFam" id="3.10.350.10:FF:000002">
    <property type="entry name" value="Oxidation resistance protein 1 isoform X1"/>
    <property type="match status" value="1"/>
</dbReference>
<dbReference type="Gene3D" id="3.10.350.10">
    <property type="entry name" value="LysM domain"/>
    <property type="match status" value="1"/>
</dbReference>
<dbReference type="InterPro" id="IPR018392">
    <property type="entry name" value="LysM_dom"/>
</dbReference>
<dbReference type="InterPro" id="IPR036779">
    <property type="entry name" value="LysM_dom_sf"/>
</dbReference>
<dbReference type="InterPro" id="IPR006571">
    <property type="entry name" value="TLDc_dom"/>
</dbReference>
<dbReference type="PANTHER" id="PTHR23354">
    <property type="entry name" value="NUCLEOLAR PROTEIN 7/ESTROGEN RECEPTOR COACTIVATOR-RELATED"/>
    <property type="match status" value="1"/>
</dbReference>
<dbReference type="PANTHER" id="PTHR23354:SF69">
    <property type="entry name" value="OXIDATION RESISTANCE PROTEIN 1"/>
    <property type="match status" value="1"/>
</dbReference>
<dbReference type="Pfam" id="PF01476">
    <property type="entry name" value="LysM"/>
    <property type="match status" value="1"/>
</dbReference>
<dbReference type="Pfam" id="PF07534">
    <property type="entry name" value="TLD"/>
    <property type="match status" value="1"/>
</dbReference>
<dbReference type="SMART" id="SM00257">
    <property type="entry name" value="LysM"/>
    <property type="match status" value="1"/>
</dbReference>
<dbReference type="SMART" id="SM00584">
    <property type="entry name" value="TLDc"/>
    <property type="match status" value="1"/>
</dbReference>
<dbReference type="SUPFAM" id="SSF54106">
    <property type="entry name" value="LysM domain"/>
    <property type="match status" value="1"/>
</dbReference>
<dbReference type="PROSITE" id="PS51782">
    <property type="entry name" value="LYSM"/>
    <property type="match status" value="1"/>
</dbReference>
<dbReference type="PROSITE" id="PS51886">
    <property type="entry name" value="TLDC"/>
    <property type="match status" value="1"/>
</dbReference>
<sequence length="874" mass="97970">MTKDKNSPGLKKKSQSVDINAPGFNPLAGAGKQTPQASKPPAPKTPIIEEEQNNAANTQKHPSRRSELKRFYTIDTGQKKTLDKKDGRRMSFQKPKGTIEYTVESRDSLNSIALKFDTTPNELVQLNKLFSRAVVTGQVLYVPDPEYVSSVESSPSLSPVSPLSPTSSEAEFDKTTNPDVHPTEATPSSTFTGIRPARVVSSTSEEEEAFTEKFLKINCKYITSGKGTVSGVLLVTPNNIMFDPHKNDPLVQENGCEEYGIMCPMEEVMSAAMYKEILDSKIKESLPIDIDQLSGRDFCHSKKMTGSNTEEIDSRIRDAGNDSASTAPRSTEESLSEDVFTESELSPIREELVSSDELRQDKSSGASSESVQTVNQAEVESLTVKSESTGTPGHLRSDTEHSTNEVGTLCHKTDLNNLEMAIKEDQIADNFQGISGPKEDSTSIKGNSDQDSFLHENSLHQEESQKENMPCGETAEFKQKQSVNKGKQGKEQNQDSQTEAEELRKLWKTHTMQQTKQQRENIQQVSQKEAKHKITSADGHIESSALLKEKQRHRLHKFLCLRVGKPMRKTFVSQASATMQQYAQRDKKHEYWFAVPQERTDHLYAFFIQWSPEIYAEDTGEYTREPGFIVVKKIEESETIEDSSNQAAAREWEVVSVAEYHRRIDALNTEELRTLCRRLQITTREDINSKQVATVKADLESESFRPNLSDPSELLLPDQIEKLTKHLPPRTIGYPWTLVYGTGKHGTSLKTLYRTMTGLDTPVLMVIKDSDGQVFGALASEPLKVSDGFYGTGETFVFTFCPEFEVFKWTGDNMFFIKGDMDSLAFGGGGGEFALWLDGDLYHGRSHSCKTFGNRTLSKKEDFFIQDIEIWAFE</sequence>
<reference key="1">
    <citation type="submission" date="2010-01" db="EMBL/GenBank/DDBJ databases">
        <title>The human OXR1 is an essential stress response gene expressing five isoforms and sorting to the inner membrane of mitochondria.</title>
        <authorList>
            <person name="Yang M."/>
            <person name="Eide L."/>
            <person name="Alseth I."/>
            <person name="Olsen O.E."/>
            <person name="Johansen R.F."/>
            <person name="Backe P.H."/>
            <person name="Luna L."/>
            <person name="Holmseth S."/>
            <person name="Gujord K.M."/>
            <person name="Ottersen O.P."/>
            <person name="Danbolt N.C."/>
            <person name="Bjoras M."/>
        </authorList>
    </citation>
    <scope>NUCLEOTIDE SEQUENCE [MRNA] (ISOFORMS 7 AND 8)</scope>
</reference>
<reference key="2">
    <citation type="journal article" date="2003" name="Cancer Lett.">
        <title>Neuroblastoma oligo-capping cDNA project: toward the understanding of the genesis and biology of neuroblastoma.</title>
        <authorList>
            <person name="Ohira M."/>
            <person name="Morohashi A."/>
            <person name="Nakamura Y."/>
            <person name="Isogai E."/>
            <person name="Furuya K."/>
            <person name="Hamano S."/>
            <person name="Machida T."/>
            <person name="Aoyama M."/>
            <person name="Fukumura M."/>
            <person name="Miyazaki K."/>
            <person name="Suzuki Y."/>
            <person name="Sugano S."/>
            <person name="Hirato J."/>
            <person name="Nakagawara A."/>
        </authorList>
    </citation>
    <scope>NUCLEOTIDE SEQUENCE [LARGE SCALE MRNA] (ISOFORM 4)</scope>
    <source>
        <tissue>Neuroblastoma</tissue>
    </source>
</reference>
<reference key="3">
    <citation type="journal article" date="2004" name="Nat. Genet.">
        <title>Complete sequencing and characterization of 21,243 full-length human cDNAs.</title>
        <authorList>
            <person name="Ota T."/>
            <person name="Suzuki Y."/>
            <person name="Nishikawa T."/>
            <person name="Otsuki T."/>
            <person name="Sugiyama T."/>
            <person name="Irie R."/>
            <person name="Wakamatsu A."/>
            <person name="Hayashi K."/>
            <person name="Sato H."/>
            <person name="Nagai K."/>
            <person name="Kimura K."/>
            <person name="Makita H."/>
            <person name="Sekine M."/>
            <person name="Obayashi M."/>
            <person name="Nishi T."/>
            <person name="Shibahara T."/>
            <person name="Tanaka T."/>
            <person name="Ishii S."/>
            <person name="Yamamoto J."/>
            <person name="Saito K."/>
            <person name="Kawai Y."/>
            <person name="Isono Y."/>
            <person name="Nakamura Y."/>
            <person name="Nagahari K."/>
            <person name="Murakami K."/>
            <person name="Yasuda T."/>
            <person name="Iwayanagi T."/>
            <person name="Wagatsuma M."/>
            <person name="Shiratori A."/>
            <person name="Sudo H."/>
            <person name="Hosoiri T."/>
            <person name="Kaku Y."/>
            <person name="Kodaira H."/>
            <person name="Kondo H."/>
            <person name="Sugawara M."/>
            <person name="Takahashi M."/>
            <person name="Kanda K."/>
            <person name="Yokoi T."/>
            <person name="Furuya T."/>
            <person name="Kikkawa E."/>
            <person name="Omura Y."/>
            <person name="Abe K."/>
            <person name="Kamihara K."/>
            <person name="Katsuta N."/>
            <person name="Sato K."/>
            <person name="Tanikawa M."/>
            <person name="Yamazaki M."/>
            <person name="Ninomiya K."/>
            <person name="Ishibashi T."/>
            <person name="Yamashita H."/>
            <person name="Murakawa K."/>
            <person name="Fujimori K."/>
            <person name="Tanai H."/>
            <person name="Kimata M."/>
            <person name="Watanabe M."/>
            <person name="Hiraoka S."/>
            <person name="Chiba Y."/>
            <person name="Ishida S."/>
            <person name="Ono Y."/>
            <person name="Takiguchi S."/>
            <person name="Watanabe S."/>
            <person name="Yosida M."/>
            <person name="Hotuta T."/>
            <person name="Kusano J."/>
            <person name="Kanehori K."/>
            <person name="Takahashi-Fujii A."/>
            <person name="Hara H."/>
            <person name="Tanase T.-O."/>
            <person name="Nomura Y."/>
            <person name="Togiya S."/>
            <person name="Komai F."/>
            <person name="Hara R."/>
            <person name="Takeuchi K."/>
            <person name="Arita M."/>
            <person name="Imose N."/>
            <person name="Musashino K."/>
            <person name="Yuuki H."/>
            <person name="Oshima A."/>
            <person name="Sasaki N."/>
            <person name="Aotsuka S."/>
            <person name="Yoshikawa Y."/>
            <person name="Matsunawa H."/>
            <person name="Ichihara T."/>
            <person name="Shiohata N."/>
            <person name="Sano S."/>
            <person name="Moriya S."/>
            <person name="Momiyama H."/>
            <person name="Satoh N."/>
            <person name="Takami S."/>
            <person name="Terashima Y."/>
            <person name="Suzuki O."/>
            <person name="Nakagawa S."/>
            <person name="Senoh A."/>
            <person name="Mizoguchi H."/>
            <person name="Goto Y."/>
            <person name="Shimizu F."/>
            <person name="Wakebe H."/>
            <person name="Hishigaki H."/>
            <person name="Watanabe T."/>
            <person name="Sugiyama A."/>
            <person name="Takemoto M."/>
            <person name="Kawakami B."/>
            <person name="Yamazaki M."/>
            <person name="Watanabe K."/>
            <person name="Kumagai A."/>
            <person name="Itakura S."/>
            <person name="Fukuzumi Y."/>
            <person name="Fujimori Y."/>
            <person name="Komiyama M."/>
            <person name="Tashiro H."/>
            <person name="Tanigami A."/>
            <person name="Fujiwara T."/>
            <person name="Ono T."/>
            <person name="Yamada K."/>
            <person name="Fujii Y."/>
            <person name="Ozaki K."/>
            <person name="Hirao M."/>
            <person name="Ohmori Y."/>
            <person name="Kawabata A."/>
            <person name="Hikiji T."/>
            <person name="Kobatake N."/>
            <person name="Inagaki H."/>
            <person name="Ikema Y."/>
            <person name="Okamoto S."/>
            <person name="Okitani R."/>
            <person name="Kawakami T."/>
            <person name="Noguchi S."/>
            <person name="Itoh T."/>
            <person name="Shigeta K."/>
            <person name="Senba T."/>
            <person name="Matsumura K."/>
            <person name="Nakajima Y."/>
            <person name="Mizuno T."/>
            <person name="Morinaga M."/>
            <person name="Sasaki M."/>
            <person name="Togashi T."/>
            <person name="Oyama M."/>
            <person name="Hata H."/>
            <person name="Watanabe M."/>
            <person name="Komatsu T."/>
            <person name="Mizushima-Sugano J."/>
            <person name="Satoh T."/>
            <person name="Shirai Y."/>
            <person name="Takahashi Y."/>
            <person name="Nakagawa K."/>
            <person name="Okumura K."/>
            <person name="Nagase T."/>
            <person name="Nomura N."/>
            <person name="Kikuchi H."/>
            <person name="Masuho Y."/>
            <person name="Yamashita R."/>
            <person name="Nakai K."/>
            <person name="Yada T."/>
            <person name="Nakamura Y."/>
            <person name="Ohara O."/>
            <person name="Isogai T."/>
            <person name="Sugano S."/>
        </authorList>
    </citation>
    <scope>NUCLEOTIDE SEQUENCE [LARGE SCALE MRNA] (ISOFORMS 1; 2; 3; 6 AND 7)</scope>
    <scope>NUCLEOTIDE SEQUENCE [LARGE SCALE MRNA] OF 1-478 (ISOFORM 5)</scope>
    <source>
        <tissue>Cerebellum</tissue>
        <tissue>Embryo</tissue>
        <tissue>Kidney</tissue>
        <tissue>Mammary gland</tissue>
        <tissue>Thalamus</tissue>
        <tissue>Tongue</tissue>
        <tissue>Trachea</tissue>
    </source>
</reference>
<reference key="4">
    <citation type="submission" date="2005-04" db="EMBL/GenBank/DDBJ databases">
        <authorList>
            <consortium name="NIEHS SNPs program"/>
        </authorList>
    </citation>
    <scope>NUCLEOTIDE SEQUENCE [GENOMIC DNA]</scope>
    <scope>VARIANTS GLY-100; PRO-360 AND ARG-516</scope>
</reference>
<reference key="5">
    <citation type="journal article" date="2006" name="Nature">
        <title>DNA sequence and analysis of human chromosome 8.</title>
        <authorList>
            <person name="Nusbaum C."/>
            <person name="Mikkelsen T.S."/>
            <person name="Zody M.C."/>
            <person name="Asakawa S."/>
            <person name="Taudien S."/>
            <person name="Garber M."/>
            <person name="Kodira C.D."/>
            <person name="Schueler M.G."/>
            <person name="Shimizu A."/>
            <person name="Whittaker C.A."/>
            <person name="Chang J.L."/>
            <person name="Cuomo C.A."/>
            <person name="Dewar K."/>
            <person name="FitzGerald M.G."/>
            <person name="Yang X."/>
            <person name="Allen N.R."/>
            <person name="Anderson S."/>
            <person name="Asakawa T."/>
            <person name="Blechschmidt K."/>
            <person name="Bloom T."/>
            <person name="Borowsky M.L."/>
            <person name="Butler J."/>
            <person name="Cook A."/>
            <person name="Corum B."/>
            <person name="DeArellano K."/>
            <person name="DeCaprio D."/>
            <person name="Dooley K.T."/>
            <person name="Dorris L. III"/>
            <person name="Engels R."/>
            <person name="Gloeckner G."/>
            <person name="Hafez N."/>
            <person name="Hagopian D.S."/>
            <person name="Hall J.L."/>
            <person name="Ishikawa S.K."/>
            <person name="Jaffe D.B."/>
            <person name="Kamat A."/>
            <person name="Kudoh J."/>
            <person name="Lehmann R."/>
            <person name="Lokitsang T."/>
            <person name="Macdonald P."/>
            <person name="Major J.E."/>
            <person name="Matthews C.D."/>
            <person name="Mauceli E."/>
            <person name="Menzel U."/>
            <person name="Mihalev A.H."/>
            <person name="Minoshima S."/>
            <person name="Murayama Y."/>
            <person name="Naylor J.W."/>
            <person name="Nicol R."/>
            <person name="Nguyen C."/>
            <person name="O'Leary S.B."/>
            <person name="O'Neill K."/>
            <person name="Parker S.C.J."/>
            <person name="Polley A."/>
            <person name="Raymond C.K."/>
            <person name="Reichwald K."/>
            <person name="Rodriguez J."/>
            <person name="Sasaki T."/>
            <person name="Schilhabel M."/>
            <person name="Siddiqui R."/>
            <person name="Smith C.L."/>
            <person name="Sneddon T.P."/>
            <person name="Talamas J.A."/>
            <person name="Tenzin P."/>
            <person name="Topham K."/>
            <person name="Venkataraman V."/>
            <person name="Wen G."/>
            <person name="Yamazaki S."/>
            <person name="Young S.K."/>
            <person name="Zeng Q."/>
            <person name="Zimmer A.R."/>
            <person name="Rosenthal A."/>
            <person name="Birren B.W."/>
            <person name="Platzer M."/>
            <person name="Shimizu N."/>
            <person name="Lander E.S."/>
        </authorList>
    </citation>
    <scope>NUCLEOTIDE SEQUENCE [LARGE SCALE GENOMIC DNA]</scope>
</reference>
<reference key="6">
    <citation type="journal article" date="2004" name="Genome Res.">
        <title>The status, quality, and expansion of the NIH full-length cDNA project: the Mammalian Gene Collection (MGC).</title>
        <authorList>
            <consortium name="The MGC Project Team"/>
        </authorList>
    </citation>
    <scope>NUCLEOTIDE SEQUENCE [LARGE SCALE MRNA] (ISOFORM 2)</scope>
    <source>
        <tissue>Lymph</tissue>
    </source>
</reference>
<reference key="7">
    <citation type="journal article" date="2007" name="BMC Genomics">
        <title>The full-ORF clone resource of the German cDNA consortium.</title>
        <authorList>
            <person name="Bechtel S."/>
            <person name="Rosenfelder H."/>
            <person name="Duda A."/>
            <person name="Schmidt C.P."/>
            <person name="Ernst U."/>
            <person name="Wellenreuther R."/>
            <person name="Mehrle A."/>
            <person name="Schuster C."/>
            <person name="Bahr A."/>
            <person name="Bloecker H."/>
            <person name="Heubner D."/>
            <person name="Hoerlein A."/>
            <person name="Michel G."/>
            <person name="Wedler H."/>
            <person name="Koehrer K."/>
            <person name="Ottenwaelder B."/>
            <person name="Poustka A."/>
            <person name="Wiemann S."/>
            <person name="Schupp I."/>
        </authorList>
    </citation>
    <scope>NUCLEOTIDE SEQUENCE [LARGE SCALE MRNA] OF 89-874 (ISOFORM 2)</scope>
    <source>
        <tissue>Lymph node</tissue>
    </source>
</reference>
<reference key="8">
    <citation type="journal article" date="2000" name="Proc. Natl. Acad. Sci. U.S.A.">
        <title>Functional genomics reveals a family of eukaryotic oxidation protection genes.</title>
        <authorList>
            <person name="Volkert M.R."/>
            <person name="Elliott N.A."/>
            <person name="Housman D.E."/>
        </authorList>
    </citation>
    <scope>NUCLEOTIDE SEQUENCE [MRNA] OF 487-874 (ISOFORM 1)</scope>
    <scope>FUNCTION</scope>
</reference>
<reference key="9">
    <citation type="journal article" date="2004" name="Mol. Cell. Biol.">
        <title>Stress induction and mitochondrial localization of Oxr1 proteins in yeast and humans.</title>
        <authorList>
            <person name="Elliott N.A."/>
            <person name="Volkert M.R."/>
        </authorList>
    </citation>
    <scope>FUNCTION</scope>
    <scope>SUBCELLULAR LOCATION</scope>
    <scope>INDUCTION</scope>
</reference>
<reference key="10">
    <citation type="journal article" date="2006" name="Cell">
        <title>Global, in vivo, and site-specific phosphorylation dynamics in signaling networks.</title>
        <authorList>
            <person name="Olsen J.V."/>
            <person name="Blagoev B."/>
            <person name="Gnad F."/>
            <person name="Macek B."/>
            <person name="Kumar C."/>
            <person name="Mortensen P."/>
            <person name="Mann M."/>
        </authorList>
    </citation>
    <scope>IDENTIFICATION BY MASS SPECTROMETRY [LARGE SCALE ANALYSIS]</scope>
    <source>
        <tissue>Cervix carcinoma</tissue>
    </source>
</reference>
<reference key="11">
    <citation type="journal article" date="2006" name="Nat. Biotechnol.">
        <title>A probability-based approach for high-throughput protein phosphorylation analysis and site localization.</title>
        <authorList>
            <person name="Beausoleil S.A."/>
            <person name="Villen J."/>
            <person name="Gerber S.A."/>
            <person name="Rush J."/>
            <person name="Gygi S.P."/>
        </authorList>
    </citation>
    <scope>PHOSPHORYLATION [LARGE SCALE ANALYSIS] AT SER-201</scope>
    <scope>IDENTIFICATION BY MASS SPECTROMETRY [LARGE SCALE ANALYSIS]</scope>
    <source>
        <tissue>Cervix carcinoma</tissue>
    </source>
</reference>
<reference key="12">
    <citation type="journal article" date="2008" name="Proc. Natl. Acad. Sci. U.S.A.">
        <title>A quantitative atlas of mitotic phosphorylation.</title>
        <authorList>
            <person name="Dephoure N."/>
            <person name="Zhou C."/>
            <person name="Villen J."/>
            <person name="Beausoleil S.A."/>
            <person name="Bakalarski C.E."/>
            <person name="Elledge S.J."/>
            <person name="Gygi S.P."/>
        </authorList>
    </citation>
    <scope>PHOSPHORYLATION [LARGE SCALE ANALYSIS] AT SER-201; SER-202 AND SER-204</scope>
    <scope>IDENTIFICATION BY MASS SPECTROMETRY [LARGE SCALE ANALYSIS]</scope>
    <source>
        <tissue>Cervix carcinoma</tissue>
    </source>
</reference>
<reference key="13">
    <citation type="journal article" date="2009" name="Sci. Signal.">
        <title>Quantitative phosphoproteomic analysis of T cell receptor signaling reveals system-wide modulation of protein-protein interactions.</title>
        <authorList>
            <person name="Mayya V."/>
            <person name="Lundgren D.H."/>
            <person name="Hwang S.-I."/>
            <person name="Rezaul K."/>
            <person name="Wu L."/>
            <person name="Eng J.K."/>
            <person name="Rodionov V."/>
            <person name="Han D.K."/>
        </authorList>
    </citation>
    <scope>PHOSPHORYLATION [LARGE SCALE ANALYSIS] AT SER-201</scope>
    <scope>IDENTIFICATION BY MASS SPECTROMETRY [LARGE SCALE ANALYSIS]</scope>
    <source>
        <tissue>Leukemic T-cell</tissue>
    </source>
</reference>
<reference key="14">
    <citation type="journal article" date="2010" name="Sci. Signal.">
        <title>Quantitative phosphoproteomics reveals widespread full phosphorylation site occupancy during mitosis.</title>
        <authorList>
            <person name="Olsen J.V."/>
            <person name="Vermeulen M."/>
            <person name="Santamaria A."/>
            <person name="Kumar C."/>
            <person name="Miller M.L."/>
            <person name="Jensen L.J."/>
            <person name="Gnad F."/>
            <person name="Cox J."/>
            <person name="Jensen T.S."/>
            <person name="Nigg E.A."/>
            <person name="Brunak S."/>
            <person name="Mann M."/>
        </authorList>
    </citation>
    <scope>PHOSPHORYLATION [LARGE SCALE ANALYSIS] AT SER-201</scope>
    <scope>IDENTIFICATION BY MASS SPECTROMETRY [LARGE SCALE ANALYSIS]</scope>
    <source>
        <tissue>Cervix carcinoma</tissue>
    </source>
</reference>
<reference key="15">
    <citation type="journal article" date="2011" name="BMC Syst. Biol.">
        <title>Initial characterization of the human central proteome.</title>
        <authorList>
            <person name="Burkard T.R."/>
            <person name="Planyavsky M."/>
            <person name="Kaupe I."/>
            <person name="Breitwieser F.P."/>
            <person name="Buerckstuemmer T."/>
            <person name="Bennett K.L."/>
            <person name="Superti-Furga G."/>
            <person name="Colinge J."/>
        </authorList>
    </citation>
    <scope>IDENTIFICATION BY MASS SPECTROMETRY [LARGE SCALE ANALYSIS]</scope>
</reference>
<reference key="16">
    <citation type="journal article" date="2011" name="Sci. Signal.">
        <title>System-wide temporal characterization of the proteome and phosphoproteome of human embryonic stem cell differentiation.</title>
        <authorList>
            <person name="Rigbolt K.T."/>
            <person name="Prokhorova T.A."/>
            <person name="Akimov V."/>
            <person name="Henningsen J."/>
            <person name="Johansen P.T."/>
            <person name="Kratchmarova I."/>
            <person name="Kassem M."/>
            <person name="Mann M."/>
            <person name="Olsen J.V."/>
            <person name="Blagoev B."/>
        </authorList>
    </citation>
    <scope>PHOSPHORYLATION [LARGE SCALE ANALYSIS] AT SER-201</scope>
    <scope>IDENTIFICATION BY MASS SPECTROMETRY [LARGE SCALE ANALYSIS]</scope>
</reference>
<reference key="17">
    <citation type="journal article" date="2012" name="BMC Mol. Biol.">
        <title>Structural/functional analysis of the human OXR1 protein: identification of exon 8 as the anti-oxidant encoding function.</title>
        <authorList>
            <person name="Murphy K.C."/>
            <person name="Volkert M.R."/>
        </authorList>
    </citation>
    <scope>ALTERNATIVE SPLICING</scope>
    <scope>ANTIOXIDANT ACTIVITY DETERMINING REGION</scope>
</reference>
<reference key="18">
    <citation type="journal article" date="2013" name="J. Proteome Res.">
        <title>Toward a comprehensive characterization of a human cancer cell phosphoproteome.</title>
        <authorList>
            <person name="Zhou H."/>
            <person name="Di Palma S."/>
            <person name="Preisinger C."/>
            <person name="Peng M."/>
            <person name="Polat A.N."/>
            <person name="Heck A.J."/>
            <person name="Mohammed S."/>
        </authorList>
    </citation>
    <scope>PHOSPHORYLATION [LARGE SCALE ANALYSIS] AT SER-201 AND SER-202</scope>
    <scope>IDENTIFICATION BY MASS SPECTROMETRY [LARGE SCALE ANALYSIS]</scope>
    <source>
        <tissue>Cervix carcinoma</tissue>
        <tissue>Erythroleukemia</tissue>
    </source>
</reference>
<reference key="19">
    <citation type="journal article" date="2014" name="J. Proteomics">
        <title>An enzyme assisted RP-RPLC approach for in-depth analysis of human liver phosphoproteome.</title>
        <authorList>
            <person name="Bian Y."/>
            <person name="Song C."/>
            <person name="Cheng K."/>
            <person name="Dong M."/>
            <person name="Wang F."/>
            <person name="Huang J."/>
            <person name="Sun D."/>
            <person name="Wang L."/>
            <person name="Ye M."/>
            <person name="Zou H."/>
        </authorList>
    </citation>
    <scope>PHOSPHORYLATION [LARGE SCALE ANALYSIS] AT SER-91 AND SER-294</scope>
    <scope>IDENTIFICATION BY MASS SPECTROMETRY [LARGE SCALE ANALYSIS]</scope>
    <source>
        <tissue>Liver</tissue>
    </source>
</reference>
<reference key="20">
    <citation type="journal article" date="2019" name="Am. J. Hum. Genet.">
        <title>Loss of oxidation resistance 1, OXR1, is associated with an autosomal-recessive neurological disease with cerebellar atrophy and lysosomal dysfunction.</title>
        <authorList>
            <person name="Wang J."/>
            <person name="Rousseau J."/>
            <person name="Kim E."/>
            <person name="Ehresmann S."/>
            <person name="Cheng Y.T."/>
            <person name="Duraine L."/>
            <person name="Zuo Z."/>
            <person name="Park Y.J."/>
            <person name="Li-Kroeger D."/>
            <person name="Bi W."/>
            <person name="Wong L.J."/>
            <person name="Rosenfeld J."/>
            <person name="Gleeson J."/>
            <person name="Faqeih E."/>
            <person name="Alkuraya F.S."/>
            <person name="Wierenga K.J."/>
            <person name="Chen J."/>
            <person name="Afenjar A."/>
            <person name="Nava C."/>
            <person name="Doummar D."/>
            <person name="Keren B."/>
            <person name="Juusola J."/>
            <person name="Grompe M."/>
            <person name="Bellen H.J."/>
            <person name="Campeau P.M."/>
        </authorList>
    </citation>
    <scope>VARIANT CHEGDD 368-SER--GLU-874 DEL</scope>
    <scope>INVOLVEMENT IN CHEGDD</scope>
</reference>
<protein>
    <recommendedName>
        <fullName>Oxidation resistance protein 1</fullName>
    </recommendedName>
</protein>
<evidence type="ECO:0000250" key="1">
    <source>
        <dbReference type="UniProtKB" id="Q4KMM3"/>
    </source>
</evidence>
<evidence type="ECO:0000255" key="2">
    <source>
        <dbReference type="PROSITE-ProRule" id="PRU01118"/>
    </source>
</evidence>
<evidence type="ECO:0000255" key="3">
    <source>
        <dbReference type="PROSITE-ProRule" id="PRU01234"/>
    </source>
</evidence>
<evidence type="ECO:0000256" key="4">
    <source>
        <dbReference type="SAM" id="MobiDB-lite"/>
    </source>
</evidence>
<evidence type="ECO:0000269" key="5">
    <source>
    </source>
</evidence>
<evidence type="ECO:0000269" key="6">
    <source>
    </source>
</evidence>
<evidence type="ECO:0000269" key="7">
    <source>
    </source>
</evidence>
<evidence type="ECO:0000269" key="8">
    <source ref="4"/>
</evidence>
<evidence type="ECO:0000303" key="9">
    <source>
    </source>
</evidence>
<evidence type="ECO:0000303" key="10">
    <source>
    </source>
</evidence>
<evidence type="ECO:0000303" key="11">
    <source>
    </source>
</evidence>
<evidence type="ECO:0000303" key="12">
    <source>
    </source>
</evidence>
<evidence type="ECO:0000303" key="13">
    <source ref="1"/>
</evidence>
<evidence type="ECO:0000305" key="14"/>
<evidence type="ECO:0007744" key="15">
    <source>
    </source>
</evidence>
<evidence type="ECO:0007744" key="16">
    <source>
    </source>
</evidence>
<evidence type="ECO:0007744" key="17">
    <source>
    </source>
</evidence>
<evidence type="ECO:0007744" key="18">
    <source>
    </source>
</evidence>
<evidence type="ECO:0007744" key="19">
    <source>
    </source>
</evidence>
<evidence type="ECO:0007744" key="20">
    <source>
    </source>
</evidence>
<evidence type="ECO:0007744" key="21">
    <source>
    </source>
</evidence>
<feature type="chain" id="PRO_0000231645" description="Oxidation resistance protein 1">
    <location>
        <begin position="1"/>
        <end position="874"/>
    </location>
</feature>
<feature type="domain" description="LysM" evidence="2">
    <location>
        <begin position="99"/>
        <end position="142"/>
    </location>
</feature>
<feature type="domain" description="GRAM">
    <location>
        <begin position="208"/>
        <end position="275"/>
    </location>
</feature>
<feature type="domain" description="TLDc" evidence="3">
    <location>
        <begin position="713"/>
        <end position="874"/>
    </location>
</feature>
<feature type="region of interest" description="Disordered" evidence="4">
    <location>
        <begin position="1"/>
        <end position="89"/>
    </location>
</feature>
<feature type="region of interest" description="Disordered" evidence="4">
    <location>
        <begin position="151"/>
        <end position="194"/>
    </location>
</feature>
<feature type="region of interest" description="Disordered" evidence="4">
    <location>
        <begin position="299"/>
        <end position="406"/>
    </location>
</feature>
<feature type="region of interest" description="Disordered" evidence="4">
    <location>
        <begin position="431"/>
        <end position="537"/>
    </location>
</feature>
<feature type="region of interest" description="Mediates oxidative antimutator activity">
    <location>
        <begin position="551"/>
        <end position="578"/>
    </location>
</feature>
<feature type="compositionally biased region" description="Basic and acidic residues" evidence="4">
    <location>
        <begin position="64"/>
        <end position="89"/>
    </location>
</feature>
<feature type="compositionally biased region" description="Low complexity" evidence="4">
    <location>
        <begin position="151"/>
        <end position="169"/>
    </location>
</feature>
<feature type="compositionally biased region" description="Basic and acidic residues" evidence="4">
    <location>
        <begin position="347"/>
        <end position="362"/>
    </location>
</feature>
<feature type="compositionally biased region" description="Polar residues" evidence="4">
    <location>
        <begin position="363"/>
        <end position="391"/>
    </location>
</feature>
<feature type="compositionally biased region" description="Basic and acidic residues" evidence="4">
    <location>
        <begin position="452"/>
        <end position="466"/>
    </location>
</feature>
<feature type="compositionally biased region" description="Polar residues" evidence="4">
    <location>
        <begin position="510"/>
        <end position="527"/>
    </location>
</feature>
<feature type="modified residue" description="Phosphoserine" evidence="21">
    <location>
        <position position="91"/>
    </location>
</feature>
<feature type="modified residue" description="Phosphothreonine" evidence="1">
    <location>
        <position position="119"/>
    </location>
</feature>
<feature type="modified residue" description="Phosphoserine" evidence="15 16 17 18 19 20">
    <location>
        <position position="201"/>
    </location>
</feature>
<feature type="modified residue" description="Phosphoserine" evidence="16 20">
    <location>
        <position position="202"/>
    </location>
</feature>
<feature type="modified residue" description="Phosphoserine" evidence="16">
    <location>
        <position position="204"/>
    </location>
</feature>
<feature type="modified residue" description="Phosphoserine" evidence="21">
    <location>
        <position position="294"/>
    </location>
</feature>
<feature type="modified residue" description="Phosphoserine" evidence="1">
    <location>
        <position position="334"/>
    </location>
</feature>
<feature type="modified residue" description="Phosphoserine" evidence="1">
    <location>
        <position position="336"/>
    </location>
</feature>
<feature type="modified residue" description="Phosphothreonine" evidence="1">
    <location>
        <position position="341"/>
    </location>
</feature>
<feature type="modified residue" description="Phosphoserine" evidence="1">
    <location>
        <position position="346"/>
    </location>
</feature>
<feature type="modified residue" description="Phosphoserine" evidence="1">
    <location>
        <position position="496"/>
    </location>
</feature>
<feature type="splice variant" id="VSP_039004" description="In isoform 4." evidence="9">
    <location>
        <begin position="1"/>
        <end position="631"/>
    </location>
</feature>
<feature type="splice variant" id="VSP_039005" description="In isoform 6." evidence="10">
    <location>
        <begin position="1"/>
        <end position="511"/>
    </location>
</feature>
<feature type="splice variant" id="VSP_039006" description="In isoform 2." evidence="10 11 12">
    <original>MTKDKNSPGLKKKSQSVDINAPGFNPLAGAGKQTPQASKPPAPKTPIIEEEQNNAANTQKHPSRRSELKRFYTI</original>
    <variation>MDYLTTFTEKSGRLLRGTANRLLGFGGGGEARQVRFEDYLREPAQGDLGCGSPPHRPPAPSSPEGP</variation>
    <location>
        <begin position="1"/>
        <end position="74"/>
    </location>
</feature>
<feature type="splice variant" id="VSP_039007" description="In isoform 3." evidence="10">
    <location>
        <begin position="1"/>
        <end position="68"/>
    </location>
</feature>
<feature type="splice variant" id="VSP_043632" description="In isoform 7." evidence="10 13">
    <original>MTKDKNSPGLKKKSQSVDINAP</original>
    <variation>MSRLWYGKKGRRHQPINHKYTL</variation>
    <location>
        <begin position="1"/>
        <end position="22"/>
    </location>
</feature>
<feature type="splice variant" id="VSP_039008" description="In isoform 5 and isoform 8." evidence="10 13">
    <original>MTKDKNSPG</original>
    <variation>MSVSNLSW</variation>
    <location>
        <begin position="1"/>
        <end position="9"/>
    </location>
</feature>
<feature type="splice variant" id="VSP_043633" description="In isoform 7." evidence="10 13">
    <location>
        <begin position="23"/>
        <end position="680"/>
    </location>
</feature>
<feature type="splice variant" id="VSP_039009" description="In isoform 3." evidence="10">
    <original>KRFYTI</original>
    <variation>MFCQRK</variation>
    <location>
        <begin position="69"/>
        <end position="74"/>
    </location>
</feature>
<feature type="splice variant" id="VSP_039010" description="In isoform 3." evidence="10">
    <original>SALLKEKQRHRLHKFLCLRVGKPMRKTF</original>
    <variation>KCYRVNEVSSSNCMVSPSFLTDSKAAVP</variation>
    <location>
        <begin position="544"/>
        <end position="571"/>
    </location>
</feature>
<feature type="splice variant" id="VSP_039011" description="In isoform 3." evidence="10">
    <location>
        <begin position="572"/>
        <end position="874"/>
    </location>
</feature>
<feature type="splice variant" id="VSP_039012" description="In isoform 4." evidence="9">
    <original>KKIEESETIEDSSNQAAAREWE</original>
    <variation>MSRLWYGKKGRRHQPINHKYTL</variation>
    <location>
        <begin position="632"/>
        <end position="653"/>
    </location>
</feature>
<feature type="splice variant" id="VSP_039014" description="In isoform 6." evidence="10">
    <location>
        <begin position="654"/>
        <end position="722"/>
    </location>
</feature>
<feature type="splice variant" id="VSP_039013" description="In isoform 2 and isoform 5." evidence="10 11 12">
    <location>
        <begin position="654"/>
        <end position="680"/>
    </location>
</feature>
<feature type="sequence variant" id="VAR_025861" description="In dbSNP:rs28921397." evidence="8">
    <original>E</original>
    <variation>G</variation>
    <location>
        <position position="100"/>
    </location>
</feature>
<feature type="sequence variant" id="VAR_025862" description="In dbSNP:rs28921419." evidence="8">
    <original>Q</original>
    <variation>P</variation>
    <location>
        <position position="360"/>
    </location>
</feature>
<feature type="sequence variant" id="VAR_083522" description="In CHEGDD." evidence="7">
    <location>
        <begin position="368"/>
        <end position="874"/>
    </location>
</feature>
<feature type="sequence variant" id="VAR_025863" description="In dbSNP:rs28921420." evidence="8">
    <original>K</original>
    <variation>R</variation>
    <location>
        <position position="516"/>
    </location>
</feature>
<feature type="sequence conflict" description="In Ref. 3; BAC04711." evidence="14" ref="3">
    <original>S</original>
    <variation>P</variation>
    <location>
        <position position="154"/>
    </location>
</feature>
<feature type="sequence conflict" description="In Ref. 8; AAG25715." evidence="14" ref="8">
    <original>D</original>
    <variation>V</variation>
    <location>
        <position position="495"/>
    </location>
</feature>
<feature type="sequence conflict" description="In Ref. 8; AAG25715." evidence="14" ref="8">
    <original>I</original>
    <variation>N</variation>
    <location>
        <position position="681"/>
    </location>
</feature>
<feature type="sequence conflict" description="In Ref. 8; AAG25715." evidence="14" ref="8">
    <original>L</original>
    <variation>F</variation>
    <location>
        <position position="727"/>
    </location>
</feature>
<feature type="sequence conflict" description="In Ref. 3; BAA91456." evidence="14" ref="3">
    <original>N</original>
    <variation>D</variation>
    <location>
        <position position="813"/>
    </location>
</feature>
<proteinExistence type="evidence at protein level"/>
<comment type="function">
    <text evidence="5 6">May be involved in protection from oxidative damage.</text>
</comment>
<comment type="interaction">
    <interactant intactId="EBI-10265887">
        <id>Q8N573-5</id>
    </interactant>
    <interactant intactId="EBI-751001">
        <id>Q14145</id>
        <label>KEAP1</label>
    </interactant>
    <organismsDiffer>false</organismsDiffer>
    <experiments>3</experiments>
</comment>
<comment type="subcellular location">
    <subcellularLocation>
        <location evidence="6">Mitochondrion</location>
    </subcellularLocation>
</comment>
<comment type="alternative products">
    <event type="alternative splicing"/>
    <isoform>
        <id>Q8N573-1</id>
        <name>1</name>
        <sequence type="displayed"/>
    </isoform>
    <isoform>
        <id>Q8N573-2</id>
        <name>2</name>
        <sequence type="described" ref="VSP_039006 VSP_039013"/>
    </isoform>
    <isoform>
        <id>Q8N573-3</id>
        <name>3</name>
        <sequence type="described" ref="VSP_039007 VSP_039009 VSP_039010 VSP_039011"/>
    </isoform>
    <isoform>
        <id>Q8N573-4</id>
        <name>4</name>
        <sequence type="described" ref="VSP_039004 VSP_039012"/>
    </isoform>
    <isoform>
        <id>Q8N573-5</id>
        <name>5</name>
        <sequence type="described" ref="VSP_039008 VSP_039013"/>
    </isoform>
    <isoform>
        <id>Q8N573-6</id>
        <name>6</name>
        <sequence type="described" ref="VSP_039005 VSP_039014"/>
    </isoform>
    <isoform>
        <id>Q8N573-7</id>
        <name>7</name>
        <sequence type="described" ref="VSP_043632 VSP_043633"/>
    </isoform>
    <isoform>
        <id>Q8N573-8</id>
        <name>8</name>
        <sequence type="described" ref="VSP_039008"/>
    </isoform>
</comment>
<comment type="induction">
    <text evidence="6">By heat shock and oxidative stress.</text>
</comment>
<comment type="disease" evidence="7">
    <disease id="DI-05744">
        <name>Cerebellar hypoplasia/atrophy, epilepsy, and global developmental delay</name>
        <acronym>CHEGDD</acronym>
        <description>An autosomal recessive neurodevelopmental disorder characterized by infantile onset of hypotonia, global developmental delay, delayed walking, and severely impaired intellectual development with profound speech delay. Patients manifest cerebellar atrophy and childhood-onset epilepsy.</description>
        <dbReference type="MIM" id="213000"/>
    </disease>
    <text>The disease is caused by variants affecting the gene represented in this entry.</text>
</comment>
<comment type="similarity">
    <text evidence="14">Belongs to the OXR1 family.</text>
</comment>
<comment type="sequence caution" evidence="14">
    <conflict type="erroneous initiation">
        <sequence resource="EMBL-CDS" id="AAG25715"/>
    </conflict>
    <text>Truncated N-terminus.</text>
</comment>
<comment type="sequence caution" evidence="14">
    <conflict type="erroneous initiation">
        <sequence resource="EMBL-CDS" id="AAH32710"/>
    </conflict>
    <text>Truncated N-terminus.</text>
</comment>
<comment type="sequence caution" evidence="14">
    <conflict type="erroneous gene model prediction">
        <sequence resource="EMBL-CDS" id="AAY26396"/>
    </conflict>
</comment>
<comment type="sequence caution" evidence="14">
    <conflict type="erroneous initiation">
        <sequence resource="EMBL-CDS" id="BAA91456"/>
    </conflict>
    <text>Truncated N-terminus.</text>
</comment>
<comment type="sequence caution" evidence="14">
    <conflict type="erroneous initiation">
        <sequence resource="EMBL-CDS" id="BAF85588"/>
    </conflict>
    <text>Truncated N-terminus.</text>
</comment>
<comment type="sequence caution" evidence="14">
    <conflict type="erroneous initiation">
        <sequence resource="EMBL-CDS" id="CAI46186"/>
    </conflict>
    <text>Truncated N-terminus.</text>
</comment>
<keyword id="KW-0025">Alternative splicing</keyword>
<keyword id="KW-0225">Disease variant</keyword>
<keyword id="KW-0887">Epilepsy</keyword>
<keyword id="KW-0991">Intellectual disability</keyword>
<keyword id="KW-0496">Mitochondrion</keyword>
<keyword id="KW-0597">Phosphoprotein</keyword>
<keyword id="KW-1267">Proteomics identification</keyword>
<keyword id="KW-1185">Reference proteome</keyword>
<keyword id="KW-0346">Stress response</keyword>
<organism>
    <name type="scientific">Homo sapiens</name>
    <name type="common">Human</name>
    <dbReference type="NCBI Taxonomy" id="9606"/>
    <lineage>
        <taxon>Eukaryota</taxon>
        <taxon>Metazoa</taxon>
        <taxon>Chordata</taxon>
        <taxon>Craniata</taxon>
        <taxon>Vertebrata</taxon>
        <taxon>Euteleostomi</taxon>
        <taxon>Mammalia</taxon>
        <taxon>Eutheria</taxon>
        <taxon>Euarchontoglires</taxon>
        <taxon>Primates</taxon>
        <taxon>Haplorrhini</taxon>
        <taxon>Catarrhini</taxon>
        <taxon>Hominidae</taxon>
        <taxon>Homo</taxon>
    </lineage>
</organism>
<gene>
    <name type="primary">OXR1</name>
    <name type="ORF">Nbla00307</name>
</gene>
<name>OXR1_HUMAN</name>
<accession>Q8N573</accession>
<accession>A6NK11</accession>
<accession>A8KA34</accession>
<accession>B3KXL1</accession>
<accession>B7Z402</accession>
<accession>B7Z8N5</accession>
<accession>D3HIS6</accession>
<accession>Q3LIB5</accession>
<accession>Q6ZVK9</accession>
<accession>Q8N8V0</accession>
<accession>Q9H266</accession>
<accession>Q9NWC7</accession>